<organism>
    <name type="scientific">Mycobacterium marinum (strain ATCC BAA-535 / M)</name>
    <dbReference type="NCBI Taxonomy" id="216594"/>
    <lineage>
        <taxon>Bacteria</taxon>
        <taxon>Bacillati</taxon>
        <taxon>Actinomycetota</taxon>
        <taxon>Actinomycetes</taxon>
        <taxon>Mycobacteriales</taxon>
        <taxon>Mycobacteriaceae</taxon>
        <taxon>Mycobacterium</taxon>
        <taxon>Mycobacterium ulcerans group</taxon>
    </lineage>
</organism>
<name>GPMA_MYCMM</name>
<accession>B2HQV4</accession>
<reference key="1">
    <citation type="journal article" date="2008" name="Genome Res.">
        <title>Insights from the complete genome sequence of Mycobacterium marinum on the evolution of Mycobacterium tuberculosis.</title>
        <authorList>
            <person name="Stinear T.P."/>
            <person name="Seemann T."/>
            <person name="Harrison P.F."/>
            <person name="Jenkin G.A."/>
            <person name="Davies J.K."/>
            <person name="Johnson P.D."/>
            <person name="Abdellah Z."/>
            <person name="Arrowsmith C."/>
            <person name="Chillingworth T."/>
            <person name="Churcher C."/>
            <person name="Clarke K."/>
            <person name="Cronin A."/>
            <person name="Davis P."/>
            <person name="Goodhead I."/>
            <person name="Holroyd N."/>
            <person name="Jagels K."/>
            <person name="Lord A."/>
            <person name="Moule S."/>
            <person name="Mungall K."/>
            <person name="Norbertczak H."/>
            <person name="Quail M.A."/>
            <person name="Rabbinowitsch E."/>
            <person name="Walker D."/>
            <person name="White B."/>
            <person name="Whitehead S."/>
            <person name="Small P.L."/>
            <person name="Brosch R."/>
            <person name="Ramakrishnan L."/>
            <person name="Fischbach M.A."/>
            <person name="Parkhill J."/>
            <person name="Cole S.T."/>
        </authorList>
    </citation>
    <scope>NUCLEOTIDE SEQUENCE [LARGE SCALE GENOMIC DNA]</scope>
    <source>
        <strain>ATCC BAA-535 / M</strain>
    </source>
</reference>
<proteinExistence type="inferred from homology"/>
<sequence>MGDTGTLVLLRHGESDWNARNLFTGWVDVGLTEKGRAEAVRSGELLAEQDLLPDVLYTSLLRRAITTAHLALDSADRLWIPVRRSWRLNERHYGALQGLDKAETKARYGEEQFMAWRRSYDTPPPLIEKGSEFSQDADPRYANIDGGPLTECLADVVARFLPYFTDVIVGDLRAGKTVLIVAHGNSLRALVKHLDHMSDEDIVGLNIPTGIPLRYDLDERLQPVVPGGTYLDPEAAAAGAAAVASQGAAKA</sequence>
<protein>
    <recommendedName>
        <fullName evidence="1">2,3-bisphosphoglycerate-dependent phosphoglycerate mutase</fullName>
        <shortName evidence="1">BPG-dependent PGAM</shortName>
        <shortName evidence="1">PGAM</shortName>
        <shortName evidence="1">Phosphoglyceromutase</shortName>
        <shortName evidence="1">dPGM</shortName>
        <ecNumber evidence="1">5.4.2.11</ecNumber>
    </recommendedName>
</protein>
<keyword id="KW-0312">Gluconeogenesis</keyword>
<keyword id="KW-0324">Glycolysis</keyword>
<keyword id="KW-0413">Isomerase</keyword>
<keyword id="KW-1185">Reference proteome</keyword>
<dbReference type="EC" id="5.4.2.11" evidence="1"/>
<dbReference type="EMBL" id="CP000854">
    <property type="protein sequence ID" value="ACC39274.1"/>
    <property type="molecule type" value="Genomic_DNA"/>
</dbReference>
<dbReference type="RefSeq" id="WP_012392755.1">
    <property type="nucleotide sequence ID" value="NC_010612.1"/>
</dbReference>
<dbReference type="SMR" id="B2HQV4"/>
<dbReference type="STRING" id="216594.MMAR_0814"/>
<dbReference type="KEGG" id="mmi:MMAR_0814"/>
<dbReference type="eggNOG" id="COG0588">
    <property type="taxonomic scope" value="Bacteria"/>
</dbReference>
<dbReference type="HOGENOM" id="CLU_033323_1_1_11"/>
<dbReference type="OrthoDB" id="9781415at2"/>
<dbReference type="UniPathway" id="UPA00109">
    <property type="reaction ID" value="UER00186"/>
</dbReference>
<dbReference type="Proteomes" id="UP000001190">
    <property type="component" value="Chromosome"/>
</dbReference>
<dbReference type="GO" id="GO:0004619">
    <property type="term" value="F:phosphoglycerate mutase activity"/>
    <property type="evidence" value="ECO:0007669"/>
    <property type="project" value="UniProtKB-EC"/>
</dbReference>
<dbReference type="GO" id="GO:0006094">
    <property type="term" value="P:gluconeogenesis"/>
    <property type="evidence" value="ECO:0007669"/>
    <property type="project" value="UniProtKB-UniRule"/>
</dbReference>
<dbReference type="GO" id="GO:0006096">
    <property type="term" value="P:glycolytic process"/>
    <property type="evidence" value="ECO:0007669"/>
    <property type="project" value="UniProtKB-UniRule"/>
</dbReference>
<dbReference type="CDD" id="cd07067">
    <property type="entry name" value="HP_PGM_like"/>
    <property type="match status" value="1"/>
</dbReference>
<dbReference type="FunFam" id="3.40.50.1240:FF:000012">
    <property type="entry name" value="Phosphoglycerate mutase 1"/>
    <property type="match status" value="1"/>
</dbReference>
<dbReference type="Gene3D" id="3.40.50.1240">
    <property type="entry name" value="Phosphoglycerate mutase-like"/>
    <property type="match status" value="1"/>
</dbReference>
<dbReference type="HAMAP" id="MF_01039">
    <property type="entry name" value="PGAM_GpmA"/>
    <property type="match status" value="1"/>
</dbReference>
<dbReference type="InterPro" id="IPR013078">
    <property type="entry name" value="His_Pase_superF_clade-1"/>
</dbReference>
<dbReference type="InterPro" id="IPR029033">
    <property type="entry name" value="His_PPase_superfam"/>
</dbReference>
<dbReference type="InterPro" id="IPR001345">
    <property type="entry name" value="PG/BPGM_mutase_AS"/>
</dbReference>
<dbReference type="InterPro" id="IPR005952">
    <property type="entry name" value="Phosphogly_mut1"/>
</dbReference>
<dbReference type="NCBIfam" id="TIGR01258">
    <property type="entry name" value="pgm_1"/>
    <property type="match status" value="1"/>
</dbReference>
<dbReference type="NCBIfam" id="NF010713">
    <property type="entry name" value="PRK14115.1"/>
    <property type="match status" value="1"/>
</dbReference>
<dbReference type="NCBIfam" id="NF010718">
    <property type="entry name" value="PRK14120.1"/>
    <property type="match status" value="1"/>
</dbReference>
<dbReference type="PANTHER" id="PTHR11931">
    <property type="entry name" value="PHOSPHOGLYCERATE MUTASE"/>
    <property type="match status" value="1"/>
</dbReference>
<dbReference type="Pfam" id="PF00300">
    <property type="entry name" value="His_Phos_1"/>
    <property type="match status" value="2"/>
</dbReference>
<dbReference type="PIRSF" id="PIRSF000709">
    <property type="entry name" value="6PFK_2-Ptase"/>
    <property type="match status" value="1"/>
</dbReference>
<dbReference type="SMART" id="SM00855">
    <property type="entry name" value="PGAM"/>
    <property type="match status" value="1"/>
</dbReference>
<dbReference type="SUPFAM" id="SSF53254">
    <property type="entry name" value="Phosphoglycerate mutase-like"/>
    <property type="match status" value="1"/>
</dbReference>
<dbReference type="PROSITE" id="PS00175">
    <property type="entry name" value="PG_MUTASE"/>
    <property type="match status" value="1"/>
</dbReference>
<evidence type="ECO:0000255" key="1">
    <source>
        <dbReference type="HAMAP-Rule" id="MF_01039"/>
    </source>
</evidence>
<comment type="function">
    <text evidence="1">Catalyzes the interconversion of 2-phosphoglycerate and 3-phosphoglycerate.</text>
</comment>
<comment type="catalytic activity">
    <reaction evidence="1">
        <text>(2R)-2-phosphoglycerate = (2R)-3-phosphoglycerate</text>
        <dbReference type="Rhea" id="RHEA:15901"/>
        <dbReference type="ChEBI" id="CHEBI:58272"/>
        <dbReference type="ChEBI" id="CHEBI:58289"/>
        <dbReference type="EC" id="5.4.2.11"/>
    </reaction>
</comment>
<comment type="pathway">
    <text evidence="1">Carbohydrate degradation; glycolysis; pyruvate from D-glyceraldehyde 3-phosphate: step 3/5.</text>
</comment>
<comment type="similarity">
    <text evidence="1">Belongs to the phosphoglycerate mutase family. BPG-dependent PGAM subfamily.</text>
</comment>
<feature type="chain" id="PRO_1000135959" description="2,3-bisphosphoglycerate-dependent phosphoglycerate mutase">
    <location>
        <begin position="1"/>
        <end position="251"/>
    </location>
</feature>
<feature type="active site" description="Tele-phosphohistidine intermediate" evidence="1">
    <location>
        <position position="12"/>
    </location>
</feature>
<feature type="active site" description="Proton donor/acceptor" evidence="1">
    <location>
        <position position="90"/>
    </location>
</feature>
<feature type="binding site" evidence="1">
    <location>
        <begin position="11"/>
        <end position="18"/>
    </location>
    <ligand>
        <name>substrate</name>
    </ligand>
</feature>
<feature type="binding site" evidence="1">
    <location>
        <begin position="24"/>
        <end position="25"/>
    </location>
    <ligand>
        <name>substrate</name>
    </ligand>
</feature>
<feature type="binding site" evidence="1">
    <location>
        <position position="63"/>
    </location>
    <ligand>
        <name>substrate</name>
    </ligand>
</feature>
<feature type="binding site" evidence="1">
    <location>
        <begin position="90"/>
        <end position="93"/>
    </location>
    <ligand>
        <name>substrate</name>
    </ligand>
</feature>
<feature type="binding site" evidence="1">
    <location>
        <position position="101"/>
    </location>
    <ligand>
        <name>substrate</name>
    </ligand>
</feature>
<feature type="binding site" evidence="1">
    <location>
        <begin position="117"/>
        <end position="118"/>
    </location>
    <ligand>
        <name>substrate</name>
    </ligand>
</feature>
<feature type="binding site" evidence="1">
    <location>
        <begin position="184"/>
        <end position="185"/>
    </location>
    <ligand>
        <name>substrate</name>
    </ligand>
</feature>
<feature type="site" description="Transition state stabilizer" evidence="1">
    <location>
        <position position="183"/>
    </location>
</feature>
<gene>
    <name evidence="1" type="primary">gpmA</name>
    <name type="ordered locus">MMAR_0814</name>
</gene>